<keyword id="KW-0030">Aminoacyl-tRNA synthetase</keyword>
<keyword id="KW-0067">ATP-binding</keyword>
<keyword id="KW-0963">Cytoplasm</keyword>
<keyword id="KW-0436">Ligase</keyword>
<keyword id="KW-0479">Metal-binding</keyword>
<keyword id="KW-0547">Nucleotide-binding</keyword>
<keyword id="KW-0648">Protein biosynthesis</keyword>
<keyword id="KW-1185">Reference proteome</keyword>
<keyword id="KW-0694">RNA-binding</keyword>
<keyword id="KW-0820">tRNA-binding</keyword>
<keyword id="KW-0862">Zinc</keyword>
<dbReference type="EC" id="6.1.1.10" evidence="1"/>
<dbReference type="EMBL" id="AE010300">
    <property type="protein sequence ID" value="AAN51116.1"/>
    <property type="molecule type" value="Genomic_DNA"/>
</dbReference>
<dbReference type="RefSeq" id="NP_714098.1">
    <property type="nucleotide sequence ID" value="NC_004342.2"/>
</dbReference>
<dbReference type="RefSeq" id="WP_001088999.1">
    <property type="nucleotide sequence ID" value="NC_004342.2"/>
</dbReference>
<dbReference type="SMR" id="Q8EZD6"/>
<dbReference type="FunCoup" id="Q8EZD6">
    <property type="interactions" value="497"/>
</dbReference>
<dbReference type="STRING" id="189518.LA_3918"/>
<dbReference type="PaxDb" id="189518-LA_3918"/>
<dbReference type="EnsemblBacteria" id="AAN51116">
    <property type="protein sequence ID" value="AAN51116"/>
    <property type="gene ID" value="LA_3918"/>
</dbReference>
<dbReference type="KEGG" id="lil:LA_3918"/>
<dbReference type="PATRIC" id="fig|189518.3.peg.3885"/>
<dbReference type="HOGENOM" id="CLU_009710_7_0_12"/>
<dbReference type="InParanoid" id="Q8EZD6"/>
<dbReference type="OrthoDB" id="9810191at2"/>
<dbReference type="Proteomes" id="UP000001408">
    <property type="component" value="Chromosome I"/>
</dbReference>
<dbReference type="GO" id="GO:0005829">
    <property type="term" value="C:cytosol"/>
    <property type="evidence" value="ECO:0000318"/>
    <property type="project" value="GO_Central"/>
</dbReference>
<dbReference type="GO" id="GO:0005524">
    <property type="term" value="F:ATP binding"/>
    <property type="evidence" value="ECO:0007669"/>
    <property type="project" value="UniProtKB-UniRule"/>
</dbReference>
<dbReference type="GO" id="GO:0046872">
    <property type="term" value="F:metal ion binding"/>
    <property type="evidence" value="ECO:0007669"/>
    <property type="project" value="UniProtKB-KW"/>
</dbReference>
<dbReference type="GO" id="GO:0004825">
    <property type="term" value="F:methionine-tRNA ligase activity"/>
    <property type="evidence" value="ECO:0000318"/>
    <property type="project" value="GO_Central"/>
</dbReference>
<dbReference type="GO" id="GO:0000049">
    <property type="term" value="F:tRNA binding"/>
    <property type="evidence" value="ECO:0007669"/>
    <property type="project" value="UniProtKB-KW"/>
</dbReference>
<dbReference type="GO" id="GO:0006431">
    <property type="term" value="P:methionyl-tRNA aminoacylation"/>
    <property type="evidence" value="ECO:0000318"/>
    <property type="project" value="GO_Central"/>
</dbReference>
<dbReference type="CDD" id="cd07957">
    <property type="entry name" value="Anticodon_Ia_Met"/>
    <property type="match status" value="1"/>
</dbReference>
<dbReference type="CDD" id="cd00814">
    <property type="entry name" value="MetRS_core"/>
    <property type="match status" value="1"/>
</dbReference>
<dbReference type="CDD" id="cd02800">
    <property type="entry name" value="tRNA_bind_EcMetRS_like"/>
    <property type="match status" value="1"/>
</dbReference>
<dbReference type="FunFam" id="2.20.28.20:FF:000001">
    <property type="entry name" value="Methionine--tRNA ligase"/>
    <property type="match status" value="1"/>
</dbReference>
<dbReference type="FunFam" id="2.40.50.140:FF:000042">
    <property type="entry name" value="Methionine--tRNA ligase"/>
    <property type="match status" value="1"/>
</dbReference>
<dbReference type="Gene3D" id="3.40.50.620">
    <property type="entry name" value="HUPs"/>
    <property type="match status" value="1"/>
</dbReference>
<dbReference type="Gene3D" id="1.10.730.10">
    <property type="entry name" value="Isoleucyl-tRNA Synthetase, Domain 1"/>
    <property type="match status" value="1"/>
</dbReference>
<dbReference type="Gene3D" id="2.20.28.20">
    <property type="entry name" value="Methionyl-tRNA synthetase, Zn-domain"/>
    <property type="match status" value="1"/>
</dbReference>
<dbReference type="Gene3D" id="2.40.50.140">
    <property type="entry name" value="Nucleic acid-binding proteins"/>
    <property type="match status" value="1"/>
</dbReference>
<dbReference type="HAMAP" id="MF_00098">
    <property type="entry name" value="Met_tRNA_synth_type1"/>
    <property type="match status" value="1"/>
</dbReference>
<dbReference type="InterPro" id="IPR001412">
    <property type="entry name" value="aa-tRNA-synth_I_CS"/>
</dbReference>
<dbReference type="InterPro" id="IPR041872">
    <property type="entry name" value="Anticodon_Met"/>
</dbReference>
<dbReference type="InterPro" id="IPR004495">
    <property type="entry name" value="Met-tRNA-synth_bsu_C"/>
</dbReference>
<dbReference type="InterPro" id="IPR023458">
    <property type="entry name" value="Met-tRNA_ligase_1"/>
</dbReference>
<dbReference type="InterPro" id="IPR014758">
    <property type="entry name" value="Met-tRNA_synth"/>
</dbReference>
<dbReference type="InterPro" id="IPR015413">
    <property type="entry name" value="Methionyl/Leucyl_tRNA_Synth"/>
</dbReference>
<dbReference type="InterPro" id="IPR033911">
    <property type="entry name" value="MetRS_core"/>
</dbReference>
<dbReference type="InterPro" id="IPR029038">
    <property type="entry name" value="MetRS_Zn"/>
</dbReference>
<dbReference type="InterPro" id="IPR012340">
    <property type="entry name" value="NA-bd_OB-fold"/>
</dbReference>
<dbReference type="InterPro" id="IPR014729">
    <property type="entry name" value="Rossmann-like_a/b/a_fold"/>
</dbReference>
<dbReference type="InterPro" id="IPR002547">
    <property type="entry name" value="tRNA-bd_dom"/>
</dbReference>
<dbReference type="InterPro" id="IPR009080">
    <property type="entry name" value="tRNAsynth_Ia_anticodon-bd"/>
</dbReference>
<dbReference type="NCBIfam" id="TIGR00398">
    <property type="entry name" value="metG"/>
    <property type="match status" value="1"/>
</dbReference>
<dbReference type="NCBIfam" id="NF001100">
    <property type="entry name" value="PRK00133.1"/>
    <property type="match status" value="1"/>
</dbReference>
<dbReference type="PANTHER" id="PTHR45765">
    <property type="entry name" value="METHIONINE--TRNA LIGASE"/>
    <property type="match status" value="1"/>
</dbReference>
<dbReference type="PANTHER" id="PTHR45765:SF1">
    <property type="entry name" value="METHIONINE--TRNA LIGASE, CYTOPLASMIC"/>
    <property type="match status" value="1"/>
</dbReference>
<dbReference type="Pfam" id="PF19303">
    <property type="entry name" value="Anticodon_3"/>
    <property type="match status" value="1"/>
</dbReference>
<dbReference type="Pfam" id="PF09334">
    <property type="entry name" value="tRNA-synt_1g"/>
    <property type="match status" value="1"/>
</dbReference>
<dbReference type="Pfam" id="PF01588">
    <property type="entry name" value="tRNA_bind"/>
    <property type="match status" value="1"/>
</dbReference>
<dbReference type="PRINTS" id="PR01041">
    <property type="entry name" value="TRNASYNTHMET"/>
</dbReference>
<dbReference type="SUPFAM" id="SSF47323">
    <property type="entry name" value="Anticodon-binding domain of a subclass of class I aminoacyl-tRNA synthetases"/>
    <property type="match status" value="1"/>
</dbReference>
<dbReference type="SUPFAM" id="SSF57770">
    <property type="entry name" value="Methionyl-tRNA synthetase (MetRS), Zn-domain"/>
    <property type="match status" value="1"/>
</dbReference>
<dbReference type="SUPFAM" id="SSF50249">
    <property type="entry name" value="Nucleic acid-binding proteins"/>
    <property type="match status" value="1"/>
</dbReference>
<dbReference type="SUPFAM" id="SSF52374">
    <property type="entry name" value="Nucleotidylyl transferase"/>
    <property type="match status" value="1"/>
</dbReference>
<dbReference type="PROSITE" id="PS00178">
    <property type="entry name" value="AA_TRNA_LIGASE_I"/>
    <property type="match status" value="1"/>
</dbReference>
<dbReference type="PROSITE" id="PS50886">
    <property type="entry name" value="TRBD"/>
    <property type="match status" value="1"/>
</dbReference>
<feature type="chain" id="PRO_0000139141" description="Methionine--tRNA ligase">
    <location>
        <begin position="1"/>
        <end position="715"/>
    </location>
</feature>
<feature type="domain" description="tRNA-binding" evidence="1">
    <location>
        <begin position="614"/>
        <end position="715"/>
    </location>
</feature>
<feature type="short sequence motif" description="'HIGH' region">
    <location>
        <begin position="17"/>
        <end position="27"/>
    </location>
</feature>
<feature type="short sequence motif" description="'KMSKS' region">
    <location>
        <begin position="359"/>
        <end position="363"/>
    </location>
</feature>
<feature type="binding site" evidence="1">
    <location>
        <position position="148"/>
    </location>
    <ligand>
        <name>Zn(2+)</name>
        <dbReference type="ChEBI" id="CHEBI:29105"/>
    </ligand>
</feature>
<feature type="binding site" evidence="1">
    <location>
        <position position="151"/>
    </location>
    <ligand>
        <name>Zn(2+)</name>
        <dbReference type="ChEBI" id="CHEBI:29105"/>
    </ligand>
</feature>
<feature type="binding site" evidence="1">
    <location>
        <position position="161"/>
    </location>
    <ligand>
        <name>Zn(2+)</name>
        <dbReference type="ChEBI" id="CHEBI:29105"/>
    </ligand>
</feature>
<feature type="binding site" evidence="1">
    <location>
        <position position="164"/>
    </location>
    <ligand>
        <name>Zn(2+)</name>
        <dbReference type="ChEBI" id="CHEBI:29105"/>
    </ligand>
</feature>
<feature type="binding site" evidence="1">
    <location>
        <position position="362"/>
    </location>
    <ligand>
        <name>ATP</name>
        <dbReference type="ChEBI" id="CHEBI:30616"/>
    </ligand>
</feature>
<name>SYM_LEPIN</name>
<sequence length="715" mass="81071">MNSSSSHRNILVTSALPYANGPIHLGHVLEGIQTDIWVRFQKAIGNECYFFCADDTHGTPVMLAARKEGITPEQLIERVGQEHYRDLTSFGIEYDHYDSTHSKANQEISKDIYLKLKSKGHISRRSIEQSYCETDKMFLPDRFIKGTCPNCKSKDQYGDNCEVCGATYSPKDLIDSHCSLCGTSPVVKNSDHIFFKLGDFHKKDEKSTSLETINPSHLKTDFDLQSWIETSGVVSESEGVKKKLKEWFDAGLQDWDISRDGPYFGFEIPDETNKYFYVWLDAPIGYMASSKNFFEKNFPNEPNKFDSFWKNKNSEIVHFIGKDILYFHTLFWPAMLEGSDYRAPSKVHVHGFIGVNGEKMSKSRGTFIKAETFVKYLDPEHLRFYLASKLGPGMDDIDLSFEDFINKVNSDLVGNLINSVSRVSTTILDALDRTLGVVSKEGLALIEEILYQTVKFGPGEDSIQNIIKYAYDQRNYAKVLREITRLGDRVNRYVNDNAPWKLIKENPEKAREVVTVTLNASRFLAIYLYPVVPKISEQIYKLLNLQDSPSFKDLDKNRILENIKVLPYEMISKRVDEKAIKAMLEENKQSEHSKKVETSENPVPEERLEISIDDLSKVELRVGQIVEAGPVDGADKLVNVKVDLGELGIKNVFAGIKVAYQPENLKGLKVVVVANLKPRKMKFGISEAMLLASGEGESLSLFIPHKDAKPGDRLK</sequence>
<proteinExistence type="inferred from homology"/>
<protein>
    <recommendedName>
        <fullName evidence="1">Methionine--tRNA ligase</fullName>
        <ecNumber evidence="1">6.1.1.10</ecNumber>
    </recommendedName>
    <alternativeName>
        <fullName evidence="1">Methionyl-tRNA synthetase</fullName>
        <shortName evidence="1">MetRS</shortName>
    </alternativeName>
</protein>
<evidence type="ECO:0000255" key="1">
    <source>
        <dbReference type="HAMAP-Rule" id="MF_00098"/>
    </source>
</evidence>
<organism>
    <name type="scientific">Leptospira interrogans serogroup Icterohaemorrhagiae serovar Lai (strain 56601)</name>
    <dbReference type="NCBI Taxonomy" id="189518"/>
    <lineage>
        <taxon>Bacteria</taxon>
        <taxon>Pseudomonadati</taxon>
        <taxon>Spirochaetota</taxon>
        <taxon>Spirochaetia</taxon>
        <taxon>Leptospirales</taxon>
        <taxon>Leptospiraceae</taxon>
        <taxon>Leptospira</taxon>
    </lineage>
</organism>
<reference key="1">
    <citation type="journal article" date="2003" name="Nature">
        <title>Unique physiological and pathogenic features of Leptospira interrogans revealed by whole-genome sequencing.</title>
        <authorList>
            <person name="Ren S.-X."/>
            <person name="Fu G."/>
            <person name="Jiang X.-G."/>
            <person name="Zeng R."/>
            <person name="Miao Y.-G."/>
            <person name="Xu H."/>
            <person name="Zhang Y.-X."/>
            <person name="Xiong H."/>
            <person name="Lu G."/>
            <person name="Lu L.-F."/>
            <person name="Jiang H.-Q."/>
            <person name="Jia J."/>
            <person name="Tu Y.-F."/>
            <person name="Jiang J.-X."/>
            <person name="Gu W.-Y."/>
            <person name="Zhang Y.-Q."/>
            <person name="Cai Z."/>
            <person name="Sheng H.-H."/>
            <person name="Yin H.-F."/>
            <person name="Zhang Y."/>
            <person name="Zhu G.-F."/>
            <person name="Wan M."/>
            <person name="Huang H.-L."/>
            <person name="Qian Z."/>
            <person name="Wang S.-Y."/>
            <person name="Ma W."/>
            <person name="Yao Z.-J."/>
            <person name="Shen Y."/>
            <person name="Qiang B.-Q."/>
            <person name="Xia Q.-C."/>
            <person name="Guo X.-K."/>
            <person name="Danchin A."/>
            <person name="Saint Girons I."/>
            <person name="Somerville R.L."/>
            <person name="Wen Y.-M."/>
            <person name="Shi M.-H."/>
            <person name="Chen Z."/>
            <person name="Xu J.-G."/>
            <person name="Zhao G.-P."/>
        </authorList>
    </citation>
    <scope>NUCLEOTIDE SEQUENCE [LARGE SCALE GENOMIC DNA]</scope>
    <source>
        <strain>56601</strain>
    </source>
</reference>
<accession>Q8EZD6</accession>
<comment type="function">
    <text evidence="1">Is required not only for elongation of protein synthesis but also for the initiation of all mRNA translation through initiator tRNA(fMet) aminoacylation.</text>
</comment>
<comment type="catalytic activity">
    <reaction evidence="1">
        <text>tRNA(Met) + L-methionine + ATP = L-methionyl-tRNA(Met) + AMP + diphosphate</text>
        <dbReference type="Rhea" id="RHEA:13481"/>
        <dbReference type="Rhea" id="RHEA-COMP:9667"/>
        <dbReference type="Rhea" id="RHEA-COMP:9698"/>
        <dbReference type="ChEBI" id="CHEBI:30616"/>
        <dbReference type="ChEBI" id="CHEBI:33019"/>
        <dbReference type="ChEBI" id="CHEBI:57844"/>
        <dbReference type="ChEBI" id="CHEBI:78442"/>
        <dbReference type="ChEBI" id="CHEBI:78530"/>
        <dbReference type="ChEBI" id="CHEBI:456215"/>
        <dbReference type="EC" id="6.1.1.10"/>
    </reaction>
</comment>
<comment type="cofactor">
    <cofactor evidence="1">
        <name>Zn(2+)</name>
        <dbReference type="ChEBI" id="CHEBI:29105"/>
    </cofactor>
    <text evidence="1">Binds 1 zinc ion per subunit.</text>
</comment>
<comment type="subunit">
    <text evidence="1">Homodimer.</text>
</comment>
<comment type="subcellular location">
    <subcellularLocation>
        <location evidence="1">Cytoplasm</location>
    </subcellularLocation>
</comment>
<comment type="similarity">
    <text evidence="1">Belongs to the class-I aminoacyl-tRNA synthetase family. MetG type 1 subfamily.</text>
</comment>
<gene>
    <name evidence="1" type="primary">metG</name>
    <name type="ordered locus">LA_3918</name>
</gene>